<keyword id="KW-0028">Amino-acid biosynthesis</keyword>
<keyword id="KW-0057">Aromatic amino acid biosynthesis</keyword>
<keyword id="KW-0456">Lyase</keyword>
<keyword id="KW-0460">Magnesium</keyword>
<keyword id="KW-0479">Metal-binding</keyword>
<keyword id="KW-0614">Plasmid</keyword>
<keyword id="KW-0822">Tryptophan biosynthesis</keyword>
<reference key="1">
    <citation type="journal article" date="1996" name="Appl. Environ. Microbiol.">
        <title>The endosymbiont (Buchnera sp.) of the aphid Diuraphis noxia contains plasmids consisting of trpEG and tandem repeats of trpEG pseudogenes.</title>
        <authorList>
            <person name="Lai C.-Y."/>
            <person name="Baumann P."/>
            <person name="Moran N."/>
        </authorList>
    </citation>
    <scope>NUCLEOTIDE SEQUENCE [GENOMIC DNA]</scope>
</reference>
<feature type="chain" id="PRO_0000154083" description="Anthranilate synthase component 1">
    <location>
        <begin position="1"/>
        <end position="519"/>
    </location>
</feature>
<feature type="binding site" evidence="2">
    <location>
        <position position="40"/>
    </location>
    <ligand>
        <name>L-tryptophan</name>
        <dbReference type="ChEBI" id="CHEBI:57912"/>
    </ligand>
</feature>
<feature type="binding site" evidence="2">
    <location>
        <begin position="293"/>
        <end position="295"/>
    </location>
    <ligand>
        <name>L-tryptophan</name>
        <dbReference type="ChEBI" id="CHEBI:57912"/>
    </ligand>
</feature>
<feature type="binding site" evidence="2">
    <location>
        <begin position="330"/>
        <end position="331"/>
    </location>
    <ligand>
        <name>chorismate</name>
        <dbReference type="ChEBI" id="CHEBI:29748"/>
    </ligand>
</feature>
<feature type="binding site" evidence="2">
    <location>
        <position position="363"/>
    </location>
    <ligand>
        <name>Mg(2+)</name>
        <dbReference type="ChEBI" id="CHEBI:18420"/>
    </ligand>
</feature>
<feature type="binding site" evidence="2">
    <location>
        <position position="451"/>
    </location>
    <ligand>
        <name>chorismate</name>
        <dbReference type="ChEBI" id="CHEBI:29748"/>
    </ligand>
</feature>
<feature type="binding site" evidence="2">
    <location>
        <position position="471"/>
    </location>
    <ligand>
        <name>chorismate</name>
        <dbReference type="ChEBI" id="CHEBI:29748"/>
    </ligand>
</feature>
<feature type="binding site" evidence="2">
    <location>
        <begin position="485"/>
        <end position="487"/>
    </location>
    <ligand>
        <name>chorismate</name>
        <dbReference type="ChEBI" id="CHEBI:29748"/>
    </ligand>
</feature>
<feature type="binding site" evidence="2">
    <location>
        <position position="487"/>
    </location>
    <ligand>
        <name>chorismate</name>
        <dbReference type="ChEBI" id="CHEBI:29748"/>
    </ligand>
</feature>
<feature type="binding site" evidence="2">
    <location>
        <position position="500"/>
    </location>
    <ligand>
        <name>Mg(2+)</name>
        <dbReference type="ChEBI" id="CHEBI:18420"/>
    </ligand>
</feature>
<evidence type="ECO:0000250" key="1"/>
<evidence type="ECO:0000250" key="2">
    <source>
        <dbReference type="UniProtKB" id="P00897"/>
    </source>
</evidence>
<evidence type="ECO:0000305" key="3"/>
<gene>
    <name type="primary">trpE</name>
</gene>
<sequence length="519" mass="59521">MEKKPYEIKIIQKKAKYHPDPTIVFNHICGSQKQTLLLETAEINKKNDLESIMIIDAALRISSERNHSVQLTALSKNGENILSILKSNLKQKVQMFIQDTSIRLEFPHFQKNLDEDKKIFSLSIFDTFRFIMKFFKNRNKVQKAMFFGGLFSYDLISNFELLPKLKKTQKCPHFCFYLAETLLIVDHQKKTCLIQNSLFTKNSHEQMRVEKRGREIQKKLEASLNSIPVRQEVKNSMLTANMSDEQYCSIIKKLQILIRKGEIFQVVPSRKFFLPCSNPLSAYQKLKKSNPSPYMFFMQDKDFTLFGASPESSLKYDDTTRQVELYPIAGTRPRGRNMDGTLNLDLDSRIELEMRTNHKELAEHLMLVDLARNDLARICEPGSRYVSDLVRVDKYPHVMHLVSRVVGTLKPELDALHAYAACMNMGTLTGAPKIRAMELIAEYEMEQRGSYGGAIGYFTDLGNLDTCITIRSAYVEDNIATIQSGSGIVYNSIPEDEVKEGINKAKRVINAIQHAHHLV</sequence>
<proteinExistence type="inferred from homology"/>
<accession>Q44697</accession>
<comment type="function">
    <text evidence="1">Part of a heterotetrameric complex that catalyzes the two-step biosynthesis of anthranilate, an intermediate in the biosynthesis of L-tryptophan. In the first step, the glutamine-binding beta subunit (TrpG) of anthranilate synthase (AS) provides the glutamine amidotransferase activity which generates ammonia as a substrate that, along with chorismate, is used in the second step, catalyzed by the large alpha subunit of AS (TrpE) to produce anthranilate. In the absence of TrpG, TrpE can synthesize anthranilate directly from chorismate and high concentrations of ammonia (By similarity).</text>
</comment>
<comment type="catalytic activity">
    <reaction>
        <text>chorismate + L-glutamine = anthranilate + pyruvate + L-glutamate + H(+)</text>
        <dbReference type="Rhea" id="RHEA:21732"/>
        <dbReference type="ChEBI" id="CHEBI:15361"/>
        <dbReference type="ChEBI" id="CHEBI:15378"/>
        <dbReference type="ChEBI" id="CHEBI:16567"/>
        <dbReference type="ChEBI" id="CHEBI:29748"/>
        <dbReference type="ChEBI" id="CHEBI:29985"/>
        <dbReference type="ChEBI" id="CHEBI:58359"/>
        <dbReference type="EC" id="4.1.3.27"/>
    </reaction>
</comment>
<comment type="cofactor">
    <cofactor evidence="2">
        <name>Mg(2+)</name>
        <dbReference type="ChEBI" id="CHEBI:18420"/>
    </cofactor>
    <text evidence="2">Binds 1 Mg(2+) ion per subunit.</text>
</comment>
<comment type="activity regulation">
    <text evidence="1">Feedback inhibited by tryptophan.</text>
</comment>
<comment type="pathway">
    <text>Amino-acid biosynthesis; L-tryptophan biosynthesis; L-tryptophan from chorismate: step 1/5.</text>
</comment>
<comment type="subunit">
    <text evidence="1">Heterotetramer consisting of two non-identical subunits: a beta subunit (TrpG) and a large alpha subunit (TrpE).</text>
</comment>
<comment type="similarity">
    <text evidence="3">Belongs to the anthranilate synthase component I family.</text>
</comment>
<dbReference type="EC" id="4.1.3.27"/>
<dbReference type="EMBL" id="L46769">
    <property type="protein sequence ID" value="AAB02275.1"/>
    <property type="molecule type" value="Genomic_DNA"/>
</dbReference>
<dbReference type="SMR" id="Q44697"/>
<dbReference type="UniPathway" id="UPA00035">
    <property type="reaction ID" value="UER00040"/>
</dbReference>
<dbReference type="GO" id="GO:0004049">
    <property type="term" value="F:anthranilate synthase activity"/>
    <property type="evidence" value="ECO:0007669"/>
    <property type="project" value="UniProtKB-EC"/>
</dbReference>
<dbReference type="GO" id="GO:0046872">
    <property type="term" value="F:metal ion binding"/>
    <property type="evidence" value="ECO:0007669"/>
    <property type="project" value="UniProtKB-KW"/>
</dbReference>
<dbReference type="GO" id="GO:0000162">
    <property type="term" value="P:L-tryptophan biosynthetic process"/>
    <property type="evidence" value="ECO:0007669"/>
    <property type="project" value="UniProtKB-UniPathway"/>
</dbReference>
<dbReference type="Gene3D" id="3.60.120.10">
    <property type="entry name" value="Anthranilate synthase"/>
    <property type="match status" value="1"/>
</dbReference>
<dbReference type="InterPro" id="IPR005801">
    <property type="entry name" value="ADC_synthase"/>
</dbReference>
<dbReference type="InterPro" id="IPR019999">
    <property type="entry name" value="Anth_synth_I-like"/>
</dbReference>
<dbReference type="InterPro" id="IPR006805">
    <property type="entry name" value="Anth_synth_I_N"/>
</dbReference>
<dbReference type="InterPro" id="IPR005257">
    <property type="entry name" value="Anth_synth_I_TrpE"/>
</dbReference>
<dbReference type="InterPro" id="IPR015890">
    <property type="entry name" value="Chorismate_C"/>
</dbReference>
<dbReference type="NCBIfam" id="NF010079">
    <property type="entry name" value="PRK13564.1"/>
    <property type="match status" value="1"/>
</dbReference>
<dbReference type="NCBIfam" id="TIGR00565">
    <property type="entry name" value="trpE_proteo"/>
    <property type="match status" value="1"/>
</dbReference>
<dbReference type="PANTHER" id="PTHR11236">
    <property type="entry name" value="AMINOBENZOATE/ANTHRANILATE SYNTHASE"/>
    <property type="match status" value="1"/>
</dbReference>
<dbReference type="PANTHER" id="PTHR11236:SF49">
    <property type="entry name" value="ANTHRANILATE SYNTHASE COMPONENT 1"/>
    <property type="match status" value="1"/>
</dbReference>
<dbReference type="Pfam" id="PF04715">
    <property type="entry name" value="Anth_synt_I_N"/>
    <property type="match status" value="1"/>
</dbReference>
<dbReference type="Pfam" id="PF00425">
    <property type="entry name" value="Chorismate_bind"/>
    <property type="match status" value="1"/>
</dbReference>
<dbReference type="PIRSF" id="PIRSF001373">
    <property type="entry name" value="TrpE"/>
    <property type="match status" value="1"/>
</dbReference>
<dbReference type="PRINTS" id="PR00095">
    <property type="entry name" value="ANTSNTHASEI"/>
</dbReference>
<dbReference type="SUPFAM" id="SSF56322">
    <property type="entry name" value="ADC synthase"/>
    <property type="match status" value="1"/>
</dbReference>
<protein>
    <recommendedName>
        <fullName>Anthranilate synthase component 1</fullName>
        <shortName>AS</shortName>
        <shortName>ASI</shortName>
        <ecNumber>4.1.3.27</ecNumber>
    </recommendedName>
</protein>
<name>TRPE_BUCDN</name>
<organism>
    <name type="scientific">Buchnera aphidicola subsp. Diuraphis noxia</name>
    <dbReference type="NCBI Taxonomy" id="118101"/>
    <lineage>
        <taxon>Bacteria</taxon>
        <taxon>Pseudomonadati</taxon>
        <taxon>Pseudomonadota</taxon>
        <taxon>Gammaproteobacteria</taxon>
        <taxon>Enterobacterales</taxon>
        <taxon>Erwiniaceae</taxon>
        <taxon>Buchnera</taxon>
    </lineage>
</organism>
<geneLocation type="plasmid">
    <name>pBDn</name>
</geneLocation>